<name>RN146_MOUSE</name>
<protein>
    <recommendedName>
        <fullName>E3 ubiquitin-protein ligase RNF146</fullName>
        <ecNumber>2.3.2.27</ecNumber>
    </recommendedName>
    <alternativeName>
        <fullName>Iduna</fullName>
    </alternativeName>
    <alternativeName>
        <fullName>RING finger protein 146</fullName>
    </alternativeName>
    <alternativeName>
        <fullName evidence="10">RING-type E3 ubiquitin transferase RNF146</fullName>
    </alternativeName>
</protein>
<evidence type="ECO:0000250" key="1"/>
<evidence type="ECO:0000250" key="2">
    <source>
        <dbReference type="UniProtKB" id="Q5XIK5"/>
    </source>
</evidence>
<evidence type="ECO:0000250" key="3">
    <source>
        <dbReference type="UniProtKB" id="Q9NTX7"/>
    </source>
</evidence>
<evidence type="ECO:0000255" key="4">
    <source>
        <dbReference type="PROSITE-ProRule" id="PRU00175"/>
    </source>
</evidence>
<evidence type="ECO:0000255" key="5">
    <source>
        <dbReference type="PROSITE-ProRule" id="PRU00248"/>
    </source>
</evidence>
<evidence type="ECO:0000256" key="6">
    <source>
        <dbReference type="SAM" id="MobiDB-lite"/>
    </source>
</evidence>
<evidence type="ECO:0000269" key="7">
    <source>
    </source>
</evidence>
<evidence type="ECO:0000269" key="8">
    <source>
    </source>
</evidence>
<evidence type="ECO:0000269" key="9">
    <source>
    </source>
</evidence>
<evidence type="ECO:0000305" key="10"/>
<evidence type="ECO:0000305" key="11">
    <source>
    </source>
</evidence>
<evidence type="ECO:0007829" key="12">
    <source>
        <dbReference type="PDB" id="4QPL"/>
    </source>
</evidence>
<comment type="function">
    <text evidence="3 8 9">E3 ubiquitin-protein ligase that specifically binds poly-ADP-ribosylated (PARsylated) proteins and mediates their ubiquitination and subsequent degradation. May regulate many important biological processes, such as cell survival and DNA damage response. Acts as an activator of the Wnt signaling pathway by mediating the ubiquitination of PARsylated AXIN1 and AXIN2, 2 key components of the beta-catenin destruction complex. Acts in cooperation with tankyrase proteins (TNKS and TNKS2), which mediate PARsylation of target proteins AXIN1, AXIN2, BLZF1, CASC3, TNKS and TNKS2. Recognizes and binds tankyrase-dependent PARsylated proteins via its WWE domain and mediates their ubiquitination, leading to their degradation. Different ubiquitin linkage types have been observed: TNKS2 undergoes ubiquitination at 'Lys-48' and 'Lys-63', while AXIN1 is only ubiquitinated at 'Lys-48'. May regulate TNKS and TNKS2 subcellular location, preventing aggregation at a centrosomal location. Neuroprotective protein (By similarity). Protects the brain against N-methyl-D-aspartate (NMDA) receptor-mediated glutamate excitotoxicity and ischemia, by interfering with PAR-induced cell death, called parthanatos (PubMed:21602803, PubMed:21825151). Prevents nuclear translocation of AIFM1 in a PAR-binding dependent manner (PubMed:21602803, PubMed:21825151). Does not affect PARP1 activation. Protects against cell death induced by DNA damaging agents, such as N-methyl-N-nitro-N-nitrosoguanidine (MNNG) and rescues cells from G1 arrest (PubMed:21602803, PubMed:21825151). Promotes cell survival after gamma-irradiation. Facilitates DNA repair (By similarity).</text>
</comment>
<comment type="catalytic activity">
    <reaction>
        <text>S-ubiquitinyl-[E2 ubiquitin-conjugating enzyme]-L-cysteine + [acceptor protein]-L-lysine = [E2 ubiquitin-conjugating enzyme]-L-cysteine + N(6)-ubiquitinyl-[acceptor protein]-L-lysine.</text>
        <dbReference type="EC" id="2.3.2.27"/>
    </reaction>
</comment>
<comment type="pathway">
    <text>Protein modification; protein ubiquitination.</text>
</comment>
<comment type="subunit">
    <text evidence="1">Can form homooligomers. Interacts with PARsylated AXIN1, AXIN2, BLZF1, CASC3, H1-2, IPO7, LIG3, NCL, PARP1, XRCC1, XRCC5 and XRCC6. Interacts with DDB1, DHX15, IQGAP1, LRPPRC, PARP2, PRKDC, RUVBL2, TNKS1 and TNKS2. Binding often leads to interactor ubiquitination, in the presence of the appropriate E1 and E2 enzymes, and proteasomal degradation.</text>
</comment>
<comment type="interaction">
    <interactant intactId="EBI-16124494">
        <id>Q9CZW6</id>
    </interactant>
    <interactant intactId="EBI-743540">
        <id>P51668</id>
        <label>UBE2D1</label>
    </interactant>
    <organismsDiffer>true</organismsDiffer>
    <experiments>2</experiments>
</comment>
<comment type="subcellular location">
    <subcellularLocation>
        <location evidence="8">Cytoplasm</location>
        <location evidence="8">Cytosol</location>
    </subcellularLocation>
    <subcellularLocation>
        <location evidence="1">Nucleus</location>
    </subcellularLocation>
    <text evidence="1">Translocates to the nucleus after DNA damage, such as laser-induced DNA breaks, and concentrates at DNA breaks. This translocation requires PARP1 activation and PAR-binding (By similarity).</text>
</comment>
<comment type="tissue specificity">
    <text evidence="7 8">Expressed at relatively high levels in the brain. Also present in spleen, heart, kidney, testis and liver. In the brain, expressed in the cerebellum, hippocampus, striatum, cortex, frontal cortex and, at lowest levels, in olfactory bulb (at protein level). Predominantly expressed in neurons.</text>
</comment>
<comment type="induction">
    <text evidence="8">Up-regulated in cortical neurons by treatment with N-methyl-D-aspartate (NMDA). Toxic doses of NMDA fail to induce Iduna expression. Sublethal exposure to oxygen-glucose deprivation also induces Iduna protein expression. Also induced by treatments that result in resistance to subsequent ischemic injury, such as 5 minute bilateral common carotid artery occlusion (at protein level).</text>
</comment>
<comment type="domain">
    <text>The WWE domain mediates non-covalent PAR-binding.</text>
</comment>
<comment type="PTM">
    <text evidence="1">Ubiquitinated; autoubiquitinated. Autoubiquitination is enhanced upon PAR-binding (By similarity).</text>
</comment>
<comment type="miscellaneous">
    <text evidence="11">Was named Iduna after the Norse goddess of protection and eternal youth.</text>
</comment>
<gene>
    <name type="primary">Rnf146</name>
</gene>
<dbReference type="EC" id="2.3.2.27"/>
<dbReference type="EMBL" id="AK012080">
    <property type="protein sequence ID" value="BAB28015.2"/>
    <property type="molecule type" value="mRNA"/>
</dbReference>
<dbReference type="EMBL" id="AK169237">
    <property type="protein sequence ID" value="BAE41005.1"/>
    <property type="molecule type" value="mRNA"/>
</dbReference>
<dbReference type="EMBL" id="AK152856">
    <property type="protein sequence ID" value="BAE31549.1"/>
    <property type="molecule type" value="mRNA"/>
</dbReference>
<dbReference type="EMBL" id="AK152907">
    <property type="protein sequence ID" value="BAE31587.1"/>
    <property type="molecule type" value="mRNA"/>
</dbReference>
<dbReference type="EMBL" id="AC153912">
    <property type="status" value="NOT_ANNOTATED_CDS"/>
    <property type="molecule type" value="Genomic_DNA"/>
</dbReference>
<dbReference type="EMBL" id="BC050795">
    <property type="protein sequence ID" value="AAH50795.1"/>
    <property type="molecule type" value="mRNA"/>
</dbReference>
<dbReference type="CCDS" id="CCDS48529.1"/>
<dbReference type="RefSeq" id="NP_001103666.1">
    <property type="nucleotide sequence ID" value="NM_001110196.1"/>
</dbReference>
<dbReference type="RefSeq" id="NP_001103667.1">
    <property type="nucleotide sequence ID" value="NM_001110197.1"/>
</dbReference>
<dbReference type="RefSeq" id="NP_001103668.1">
    <property type="nucleotide sequence ID" value="NM_001110198.1"/>
</dbReference>
<dbReference type="RefSeq" id="NP_001271208.1">
    <property type="nucleotide sequence ID" value="NM_001284279.1"/>
</dbReference>
<dbReference type="RefSeq" id="NP_080794.2">
    <property type="nucleotide sequence ID" value="NM_026518.4"/>
</dbReference>
<dbReference type="PDB" id="1UJR">
    <property type="method" value="NMR"/>
    <property type="chains" value="A=83-179"/>
</dbReference>
<dbReference type="PDB" id="2RSF">
    <property type="method" value="NMR"/>
    <property type="chains" value="A=83-179"/>
</dbReference>
<dbReference type="PDB" id="4QPL">
    <property type="method" value="X-ray"/>
    <property type="resolution" value="1.90 A"/>
    <property type="chains" value="A/C=32-185"/>
</dbReference>
<dbReference type="PDBsum" id="1UJR"/>
<dbReference type="PDBsum" id="2RSF"/>
<dbReference type="PDBsum" id="4QPL"/>
<dbReference type="SMR" id="Q9CZW6"/>
<dbReference type="BioGRID" id="212611">
    <property type="interactions" value="1"/>
</dbReference>
<dbReference type="DIP" id="DIP-61462N"/>
<dbReference type="FunCoup" id="Q9CZW6">
    <property type="interactions" value="3800"/>
</dbReference>
<dbReference type="IntAct" id="Q9CZW6">
    <property type="interactions" value="1"/>
</dbReference>
<dbReference type="STRING" id="10090.ENSMUSP00000037224"/>
<dbReference type="GlyGen" id="Q9CZW6">
    <property type="glycosylation" value="2 sites, 1 O-linked glycan (1 site)"/>
</dbReference>
<dbReference type="iPTMnet" id="Q9CZW6"/>
<dbReference type="PhosphoSitePlus" id="Q9CZW6"/>
<dbReference type="PaxDb" id="10090-ENSMUSP00000124215"/>
<dbReference type="ProteomicsDB" id="300414"/>
<dbReference type="ABCD" id="Q9CZW6">
    <property type="antibodies" value="1 sequenced antibody"/>
</dbReference>
<dbReference type="Antibodypedia" id="19579">
    <property type="antibodies" value="65 antibodies from 17 providers"/>
</dbReference>
<dbReference type="DNASU" id="68031"/>
<dbReference type="Ensembl" id="ENSMUST00000037548.11">
    <property type="protein sequence ID" value="ENSMUSP00000037224.5"/>
    <property type="gene ID" value="ENSMUSG00000038876.13"/>
</dbReference>
<dbReference type="Ensembl" id="ENSMUST00000160144.9">
    <property type="protein sequence ID" value="ENSMUSP00000124288.2"/>
    <property type="gene ID" value="ENSMUSG00000038876.13"/>
</dbReference>
<dbReference type="Ensembl" id="ENSMUST00000160372.9">
    <property type="protein sequence ID" value="ENSMUSP00000124215.2"/>
    <property type="gene ID" value="ENSMUSG00000038876.13"/>
</dbReference>
<dbReference type="Ensembl" id="ENSMUST00000162335.8">
    <property type="protein sequence ID" value="ENSMUSP00000124772.2"/>
    <property type="gene ID" value="ENSMUSG00000038876.13"/>
</dbReference>
<dbReference type="GeneID" id="68031"/>
<dbReference type="KEGG" id="mmu:68031"/>
<dbReference type="UCSC" id="uc007esy.2">
    <property type="organism name" value="mouse"/>
</dbReference>
<dbReference type="AGR" id="MGI:1915281"/>
<dbReference type="CTD" id="81847"/>
<dbReference type="MGI" id="MGI:1915281">
    <property type="gene designation" value="Rnf146"/>
</dbReference>
<dbReference type="VEuPathDB" id="HostDB:ENSMUSG00000038876"/>
<dbReference type="eggNOG" id="KOG0824">
    <property type="taxonomic scope" value="Eukaryota"/>
</dbReference>
<dbReference type="GeneTree" id="ENSGT00390000000358"/>
<dbReference type="HOGENOM" id="CLU_067425_0_0_1"/>
<dbReference type="InParanoid" id="Q9CZW6"/>
<dbReference type="OMA" id="KMAGCGE"/>
<dbReference type="OrthoDB" id="10065815at2759"/>
<dbReference type="PhylomeDB" id="Q9CZW6"/>
<dbReference type="TreeFam" id="TF318925"/>
<dbReference type="Reactome" id="R-MMU-201681">
    <property type="pathway name" value="TCF dependent signaling in response to WNT"/>
</dbReference>
<dbReference type="Reactome" id="R-MMU-4641257">
    <property type="pathway name" value="Degradation of AXIN"/>
</dbReference>
<dbReference type="Reactome" id="R-MMU-5689880">
    <property type="pathway name" value="Ub-specific processing proteases"/>
</dbReference>
<dbReference type="Reactome" id="R-MMU-8948751">
    <property type="pathway name" value="Regulation of PTEN stability and activity"/>
</dbReference>
<dbReference type="UniPathway" id="UPA00143"/>
<dbReference type="BioGRID-ORCS" id="68031">
    <property type="hits" value="3 hits in 76 CRISPR screens"/>
</dbReference>
<dbReference type="ChiTaRS" id="Rnf146">
    <property type="organism name" value="mouse"/>
</dbReference>
<dbReference type="EvolutionaryTrace" id="Q9CZW6"/>
<dbReference type="PRO" id="PR:Q9CZW6"/>
<dbReference type="Proteomes" id="UP000000589">
    <property type="component" value="Chromosome 10"/>
</dbReference>
<dbReference type="RNAct" id="Q9CZW6">
    <property type="molecule type" value="protein"/>
</dbReference>
<dbReference type="Bgee" id="ENSMUSG00000038876">
    <property type="expression patterns" value="Expressed in dorsal pancreas and 256 other cell types or tissues"/>
</dbReference>
<dbReference type="ExpressionAtlas" id="Q9CZW6">
    <property type="expression patterns" value="baseline and differential"/>
</dbReference>
<dbReference type="GO" id="GO:0005829">
    <property type="term" value="C:cytosol"/>
    <property type="evidence" value="ECO:0000250"/>
    <property type="project" value="UniProtKB"/>
</dbReference>
<dbReference type="GO" id="GO:0005654">
    <property type="term" value="C:nucleoplasm"/>
    <property type="evidence" value="ECO:0007669"/>
    <property type="project" value="Ensembl"/>
</dbReference>
<dbReference type="GO" id="GO:0005886">
    <property type="term" value="C:plasma membrane"/>
    <property type="evidence" value="ECO:0007669"/>
    <property type="project" value="Ensembl"/>
</dbReference>
<dbReference type="GO" id="GO:0072572">
    <property type="term" value="F:poly-ADP-D-ribose binding"/>
    <property type="evidence" value="ECO:0000250"/>
    <property type="project" value="UniProtKB"/>
</dbReference>
<dbReference type="GO" id="GO:0061630">
    <property type="term" value="F:ubiquitin protein ligase activity"/>
    <property type="evidence" value="ECO:0007669"/>
    <property type="project" value="InterPro"/>
</dbReference>
<dbReference type="GO" id="GO:0004842">
    <property type="term" value="F:ubiquitin-protein transferase activity"/>
    <property type="evidence" value="ECO:0000250"/>
    <property type="project" value="UniProtKB"/>
</dbReference>
<dbReference type="GO" id="GO:0008270">
    <property type="term" value="F:zinc ion binding"/>
    <property type="evidence" value="ECO:0007669"/>
    <property type="project" value="UniProtKB-KW"/>
</dbReference>
<dbReference type="GO" id="GO:0090263">
    <property type="term" value="P:positive regulation of canonical Wnt signaling pathway"/>
    <property type="evidence" value="ECO:0000250"/>
    <property type="project" value="UniProtKB"/>
</dbReference>
<dbReference type="GO" id="GO:0051865">
    <property type="term" value="P:protein autoubiquitination"/>
    <property type="evidence" value="ECO:0000250"/>
    <property type="project" value="UniProtKB"/>
</dbReference>
<dbReference type="GO" id="GO:0070936">
    <property type="term" value="P:protein K48-linked ubiquitination"/>
    <property type="evidence" value="ECO:0000250"/>
    <property type="project" value="UniProtKB"/>
</dbReference>
<dbReference type="GO" id="GO:0006511">
    <property type="term" value="P:ubiquitin-dependent protein catabolic process"/>
    <property type="evidence" value="ECO:0000250"/>
    <property type="project" value="UniProtKB"/>
</dbReference>
<dbReference type="GO" id="GO:0016055">
    <property type="term" value="P:Wnt signaling pathway"/>
    <property type="evidence" value="ECO:0007669"/>
    <property type="project" value="UniProtKB-KW"/>
</dbReference>
<dbReference type="CDD" id="cd16546">
    <property type="entry name" value="RING-HC_RNF146"/>
    <property type="match status" value="1"/>
</dbReference>
<dbReference type="FunFam" id="3.30.40.10:FF:000204">
    <property type="entry name" value="E3 ubiquitin-protein ligase RNF146"/>
    <property type="match status" value="1"/>
</dbReference>
<dbReference type="FunFam" id="3.30.720.50:FF:000003">
    <property type="entry name" value="E3 ubiquitin-protein ligase RNF146"/>
    <property type="match status" value="1"/>
</dbReference>
<dbReference type="Gene3D" id="3.30.720.50">
    <property type="match status" value="1"/>
</dbReference>
<dbReference type="Gene3D" id="3.30.40.10">
    <property type="entry name" value="Zinc/RING finger domain, C3HC4 (zinc finger)"/>
    <property type="match status" value="1"/>
</dbReference>
<dbReference type="InterPro" id="IPR044110">
    <property type="entry name" value="RING-HC_RNF146"/>
</dbReference>
<dbReference type="InterPro" id="IPR033509">
    <property type="entry name" value="RNF146"/>
</dbReference>
<dbReference type="InterPro" id="IPR018123">
    <property type="entry name" value="WWE-dom_subgr"/>
</dbReference>
<dbReference type="InterPro" id="IPR004170">
    <property type="entry name" value="WWE_dom"/>
</dbReference>
<dbReference type="InterPro" id="IPR037197">
    <property type="entry name" value="WWE_dom_sf"/>
</dbReference>
<dbReference type="InterPro" id="IPR001841">
    <property type="entry name" value="Znf_RING"/>
</dbReference>
<dbReference type="InterPro" id="IPR013083">
    <property type="entry name" value="Znf_RING/FYVE/PHD"/>
</dbReference>
<dbReference type="InterPro" id="IPR017907">
    <property type="entry name" value="Znf_RING_CS"/>
</dbReference>
<dbReference type="PANTHER" id="PTHR13417">
    <property type="entry name" value="E3 UBIQUITIN-PROTEIN LIGASE RNF146"/>
    <property type="match status" value="1"/>
</dbReference>
<dbReference type="PANTHER" id="PTHR13417:SF2">
    <property type="entry name" value="E3 UBIQUITIN-PROTEIN LIGASE RNF146"/>
    <property type="match status" value="1"/>
</dbReference>
<dbReference type="Pfam" id="PF02825">
    <property type="entry name" value="WWE"/>
    <property type="match status" value="1"/>
</dbReference>
<dbReference type="Pfam" id="PF13920">
    <property type="entry name" value="zf-C3HC4_3"/>
    <property type="match status" value="1"/>
</dbReference>
<dbReference type="SMART" id="SM00184">
    <property type="entry name" value="RING"/>
    <property type="match status" value="1"/>
</dbReference>
<dbReference type="SMART" id="SM00678">
    <property type="entry name" value="WWE"/>
    <property type="match status" value="1"/>
</dbReference>
<dbReference type="SUPFAM" id="SSF57850">
    <property type="entry name" value="RING/U-box"/>
    <property type="match status" value="1"/>
</dbReference>
<dbReference type="SUPFAM" id="SSF117839">
    <property type="entry name" value="WWE domain"/>
    <property type="match status" value="1"/>
</dbReference>
<dbReference type="PROSITE" id="PS50918">
    <property type="entry name" value="WWE"/>
    <property type="match status" value="1"/>
</dbReference>
<dbReference type="PROSITE" id="PS00518">
    <property type="entry name" value="ZF_RING_1"/>
    <property type="match status" value="1"/>
</dbReference>
<dbReference type="PROSITE" id="PS50089">
    <property type="entry name" value="ZF_RING_2"/>
    <property type="match status" value="1"/>
</dbReference>
<keyword id="KW-0002">3D-structure</keyword>
<keyword id="KW-0963">Cytoplasm</keyword>
<keyword id="KW-1017">Isopeptide bond</keyword>
<keyword id="KW-0479">Metal-binding</keyword>
<keyword id="KW-0539">Nucleus</keyword>
<keyword id="KW-0597">Phosphoprotein</keyword>
<keyword id="KW-1185">Reference proteome</keyword>
<keyword id="KW-0808">Transferase</keyword>
<keyword id="KW-0832">Ubl conjugation</keyword>
<keyword id="KW-0833">Ubl conjugation pathway</keyword>
<keyword id="KW-0879">Wnt signaling pathway</keyword>
<keyword id="KW-0862">Zinc</keyword>
<keyword id="KW-0863">Zinc-finger</keyword>
<sequence>MEMAGCGEIDHSINMLPTNKKANESCSNTAPSLTVPECAICLQTCVHPVSLPCKHVFCYLCVKGASWLGKRCALCRQEIPEDFLDKPTLLSPEELKAASRGNGEYAWYYEGRNGWWQYDERTSRELEDAFSKGKKNTEMLIAGFLYVADLENMVQYRRNEHGRRRKIKRDIIDIPKKGVAGLRLDCDTNTVNLARESSADGADSGSAQTGASVQLAVPSSTRPLTSVDGQLTSPVTPSPDAGISLEDSFAHLQLSGDSIAERSHRGEGEEDHESPSSGRVPDTSVEETESDASSDSEDAPVVVAQHSLTQQRPLVPNGNQTVADQSDRSGTDRSVAGGGTMSVNVRSRRPDGQCTVTEV</sequence>
<organism>
    <name type="scientific">Mus musculus</name>
    <name type="common">Mouse</name>
    <dbReference type="NCBI Taxonomy" id="10090"/>
    <lineage>
        <taxon>Eukaryota</taxon>
        <taxon>Metazoa</taxon>
        <taxon>Chordata</taxon>
        <taxon>Craniata</taxon>
        <taxon>Vertebrata</taxon>
        <taxon>Euteleostomi</taxon>
        <taxon>Mammalia</taxon>
        <taxon>Eutheria</taxon>
        <taxon>Euarchontoglires</taxon>
        <taxon>Glires</taxon>
        <taxon>Rodentia</taxon>
        <taxon>Myomorpha</taxon>
        <taxon>Muroidea</taxon>
        <taxon>Muridae</taxon>
        <taxon>Murinae</taxon>
        <taxon>Mus</taxon>
        <taxon>Mus</taxon>
    </lineage>
</organism>
<feature type="chain" id="PRO_0000056108" description="E3 ubiquitin-protein ligase RNF146">
    <location>
        <begin position="1"/>
        <end position="359"/>
    </location>
</feature>
<feature type="domain" description="WWE" evidence="5">
    <location>
        <begin position="93"/>
        <end position="169"/>
    </location>
</feature>
<feature type="zinc finger region" description="RING-type" evidence="4">
    <location>
        <begin position="38"/>
        <end position="76"/>
    </location>
</feature>
<feature type="region of interest" description="Disordered" evidence="6">
    <location>
        <begin position="197"/>
        <end position="243"/>
    </location>
</feature>
<feature type="region of interest" description="Disordered" evidence="6">
    <location>
        <begin position="261"/>
        <end position="359"/>
    </location>
</feature>
<feature type="compositionally biased region" description="Low complexity" evidence="6">
    <location>
        <begin position="199"/>
        <end position="212"/>
    </location>
</feature>
<feature type="compositionally biased region" description="Polar residues" evidence="6">
    <location>
        <begin position="217"/>
        <end position="235"/>
    </location>
</feature>
<feature type="compositionally biased region" description="Acidic residues" evidence="6">
    <location>
        <begin position="284"/>
        <end position="298"/>
    </location>
</feature>
<feature type="compositionally biased region" description="Polar residues" evidence="6">
    <location>
        <begin position="306"/>
        <end position="324"/>
    </location>
</feature>
<feature type="binding site" evidence="1">
    <location>
        <position position="109"/>
    </location>
    <ligand>
        <name>a glycoprotein</name>
        <dbReference type="ChEBI" id="CHEBI:17089"/>
    </ligand>
    <ligandPart>
        <name>poly[(1''-&gt;2')-ADP-alpha-D-ribose] group</name>
        <dbReference type="ChEBI" id="CHEBI:157741"/>
    </ligandPart>
</feature>
<feature type="binding site" evidence="1">
    <location>
        <position position="112"/>
    </location>
    <ligand>
        <name>a glycoprotein</name>
        <dbReference type="ChEBI" id="CHEBI:17089"/>
    </ligand>
    <ligandPart>
        <name>poly[(1''-&gt;2')-ADP-alpha-D-ribose] group</name>
        <dbReference type="ChEBI" id="CHEBI:157741"/>
    </ligandPart>
</feature>
<feature type="binding site" evidence="1">
    <location>
        <position position="116"/>
    </location>
    <ligand>
        <name>a glycoprotein</name>
        <dbReference type="ChEBI" id="CHEBI:17089"/>
    </ligand>
    <ligandPart>
        <name>poly[(1''-&gt;2')-ADP-alpha-D-ribose] group</name>
        <dbReference type="ChEBI" id="CHEBI:157741"/>
    </ligandPart>
</feature>
<feature type="binding site" evidence="1">
    <location>
        <position position="146"/>
    </location>
    <ligand>
        <name>a glycoprotein</name>
        <dbReference type="ChEBI" id="CHEBI:17089"/>
    </ligand>
    <ligandPart>
        <name>poly[(1''-&gt;2')-ADP-alpha-D-ribose] group</name>
        <dbReference type="ChEBI" id="CHEBI:157741"/>
    </ligandPart>
</feature>
<feature type="binding site" evidence="1">
    <location>
        <position position="155"/>
    </location>
    <ligand>
        <name>a glycoprotein</name>
        <dbReference type="ChEBI" id="CHEBI:17089"/>
    </ligand>
    <ligandPart>
        <name>poly[(1''-&gt;2')-ADP-alpha-D-ribose] group</name>
        <dbReference type="ChEBI" id="CHEBI:157741"/>
    </ligandPart>
</feature>
<feature type="binding site" evidence="1">
    <location>
        <position position="165"/>
    </location>
    <ligand>
        <name>a glycoprotein</name>
        <dbReference type="ChEBI" id="CHEBI:17089"/>
    </ligand>
    <ligandPart>
        <name>poly[(1''-&gt;2')-ADP-alpha-D-ribose] group</name>
        <dbReference type="ChEBI" id="CHEBI:157741"/>
    </ligandPart>
</feature>
<feature type="binding site" evidence="1">
    <location>
        <position position="177"/>
    </location>
    <ligand>
        <name>a glycoprotein</name>
        <dbReference type="ChEBI" id="CHEBI:17089"/>
    </ligand>
    <ligandPart>
        <name>poly[(1''-&gt;2')-ADP-alpha-D-ribose] group</name>
        <dbReference type="ChEBI" id="CHEBI:157741"/>
    </ligandPart>
</feature>
<feature type="modified residue" description="Phosphoserine" evidence="2">
    <location>
        <position position="290"/>
    </location>
</feature>
<feature type="modified residue" description="Phosphoserine" evidence="2">
    <location>
        <position position="294"/>
    </location>
</feature>
<feature type="cross-link" description="Glycyl lysine isopeptide (Lys-Gly) (interchain with G-Cter in ubiquitin)" evidence="3">
    <location>
        <position position="86"/>
    </location>
</feature>
<feature type="cross-link" description="Glycyl lysine isopeptide (Lys-Gly) (interchain with G-Cter in ubiquitin)" evidence="3">
    <location>
        <position position="96"/>
    </location>
</feature>
<feature type="cross-link" description="Glycyl lysine isopeptide (Lys-Gly) (interchain with G-Cter in ubiquitin)" evidence="3">
    <location>
        <position position="132"/>
    </location>
</feature>
<feature type="cross-link" description="Glycyl lysine isopeptide (Lys-Gly) (interchain with G-Cter in ubiquitin)" evidence="3">
    <location>
        <position position="177"/>
    </location>
</feature>
<feature type="mutagenesis site" description="Loss of ubiquitination activity." evidence="9">
    <original>H</original>
    <variation>A</variation>
    <location>
        <position position="55"/>
    </location>
</feature>
<feature type="mutagenesis site" description="Loss of ubiquitination activity. Loss of protection against DNA damage. No effect on PAR-binding." evidence="9">
    <original>C</original>
    <variation>A</variation>
    <location>
        <position position="61"/>
    </location>
</feature>
<feature type="mutagenesis site" description="Loss of PAR-binding and of protection against DNA damage; when associated with A-157." evidence="8 9">
    <original>Y</original>
    <variation>A</variation>
    <location>
        <position position="156"/>
    </location>
</feature>
<feature type="mutagenesis site" description="Loss of PAR-binding and of protection against DNA damage; when associated with A-156." evidence="8 9">
    <original>R</original>
    <variation>A</variation>
    <location>
        <position position="157"/>
    </location>
</feature>
<feature type="sequence conflict" description="In Ref. 1; BAE31587/BAE31549." evidence="10" ref="1">
    <original>G</original>
    <variation>R</variation>
    <location>
        <position position="339"/>
    </location>
</feature>
<feature type="turn" evidence="12">
    <location>
        <begin position="39"/>
        <end position="41"/>
    </location>
</feature>
<feature type="strand" evidence="12">
    <location>
        <begin position="42"/>
        <end position="44"/>
    </location>
</feature>
<feature type="strand" evidence="12">
    <location>
        <begin position="46"/>
        <end position="50"/>
    </location>
</feature>
<feature type="strand" evidence="12">
    <location>
        <begin position="56"/>
        <end position="58"/>
    </location>
</feature>
<feature type="helix" evidence="12">
    <location>
        <begin position="59"/>
        <end position="66"/>
    </location>
</feature>
<feature type="turn" evidence="12">
    <location>
        <begin position="67"/>
        <end position="69"/>
    </location>
</feature>
<feature type="turn" evidence="12">
    <location>
        <begin position="73"/>
        <end position="75"/>
    </location>
</feature>
<feature type="turn" evidence="12">
    <location>
        <begin position="81"/>
        <end position="85"/>
    </location>
</feature>
<feature type="helix" evidence="12">
    <location>
        <begin position="92"/>
        <end position="98"/>
    </location>
</feature>
<feature type="turn" evidence="12">
    <location>
        <begin position="99"/>
        <end position="101"/>
    </location>
</feature>
<feature type="strand" evidence="12">
    <location>
        <begin position="105"/>
        <end position="111"/>
    </location>
</feature>
<feature type="strand" evidence="12">
    <location>
        <begin position="114"/>
        <end position="117"/>
    </location>
</feature>
<feature type="helix" evidence="12">
    <location>
        <begin position="120"/>
        <end position="131"/>
    </location>
</feature>
<feature type="strand" evidence="12">
    <location>
        <begin position="135"/>
        <end position="141"/>
    </location>
</feature>
<feature type="strand" evidence="12">
    <location>
        <begin position="144"/>
        <end position="149"/>
    </location>
</feature>
<feature type="turn" evidence="12">
    <location>
        <begin position="150"/>
        <end position="153"/>
    </location>
</feature>
<feature type="strand" evidence="12">
    <location>
        <begin position="154"/>
        <end position="159"/>
    </location>
</feature>
<feature type="strand" evidence="12">
    <location>
        <begin position="163"/>
        <end position="174"/>
    </location>
</feature>
<feature type="strand" evidence="12">
    <location>
        <begin position="177"/>
        <end position="179"/>
    </location>
</feature>
<accession>Q9CZW6</accession>
<accession>E0CX97</accession>
<accession>Q3TF93</accession>
<accession>Q3U6Y7</accession>
<proteinExistence type="evidence at protein level"/>
<reference key="1">
    <citation type="journal article" date="2005" name="Science">
        <title>The transcriptional landscape of the mammalian genome.</title>
        <authorList>
            <person name="Carninci P."/>
            <person name="Kasukawa T."/>
            <person name="Katayama S."/>
            <person name="Gough J."/>
            <person name="Frith M.C."/>
            <person name="Maeda N."/>
            <person name="Oyama R."/>
            <person name="Ravasi T."/>
            <person name="Lenhard B."/>
            <person name="Wells C."/>
            <person name="Kodzius R."/>
            <person name="Shimokawa K."/>
            <person name="Bajic V.B."/>
            <person name="Brenner S.E."/>
            <person name="Batalov S."/>
            <person name="Forrest A.R."/>
            <person name="Zavolan M."/>
            <person name="Davis M.J."/>
            <person name="Wilming L.G."/>
            <person name="Aidinis V."/>
            <person name="Allen J.E."/>
            <person name="Ambesi-Impiombato A."/>
            <person name="Apweiler R."/>
            <person name="Aturaliya R.N."/>
            <person name="Bailey T.L."/>
            <person name="Bansal M."/>
            <person name="Baxter L."/>
            <person name="Beisel K.W."/>
            <person name="Bersano T."/>
            <person name="Bono H."/>
            <person name="Chalk A.M."/>
            <person name="Chiu K.P."/>
            <person name="Choudhary V."/>
            <person name="Christoffels A."/>
            <person name="Clutterbuck D.R."/>
            <person name="Crowe M.L."/>
            <person name="Dalla E."/>
            <person name="Dalrymple B.P."/>
            <person name="de Bono B."/>
            <person name="Della Gatta G."/>
            <person name="di Bernardo D."/>
            <person name="Down T."/>
            <person name="Engstrom P."/>
            <person name="Fagiolini M."/>
            <person name="Faulkner G."/>
            <person name="Fletcher C.F."/>
            <person name="Fukushima T."/>
            <person name="Furuno M."/>
            <person name="Futaki S."/>
            <person name="Gariboldi M."/>
            <person name="Georgii-Hemming P."/>
            <person name="Gingeras T.R."/>
            <person name="Gojobori T."/>
            <person name="Green R.E."/>
            <person name="Gustincich S."/>
            <person name="Harbers M."/>
            <person name="Hayashi Y."/>
            <person name="Hensch T.K."/>
            <person name="Hirokawa N."/>
            <person name="Hill D."/>
            <person name="Huminiecki L."/>
            <person name="Iacono M."/>
            <person name="Ikeo K."/>
            <person name="Iwama A."/>
            <person name="Ishikawa T."/>
            <person name="Jakt M."/>
            <person name="Kanapin A."/>
            <person name="Katoh M."/>
            <person name="Kawasawa Y."/>
            <person name="Kelso J."/>
            <person name="Kitamura H."/>
            <person name="Kitano H."/>
            <person name="Kollias G."/>
            <person name="Krishnan S.P."/>
            <person name="Kruger A."/>
            <person name="Kummerfeld S.K."/>
            <person name="Kurochkin I.V."/>
            <person name="Lareau L.F."/>
            <person name="Lazarevic D."/>
            <person name="Lipovich L."/>
            <person name="Liu J."/>
            <person name="Liuni S."/>
            <person name="McWilliam S."/>
            <person name="Madan Babu M."/>
            <person name="Madera M."/>
            <person name="Marchionni L."/>
            <person name="Matsuda H."/>
            <person name="Matsuzawa S."/>
            <person name="Miki H."/>
            <person name="Mignone F."/>
            <person name="Miyake S."/>
            <person name="Morris K."/>
            <person name="Mottagui-Tabar S."/>
            <person name="Mulder N."/>
            <person name="Nakano N."/>
            <person name="Nakauchi H."/>
            <person name="Ng P."/>
            <person name="Nilsson R."/>
            <person name="Nishiguchi S."/>
            <person name="Nishikawa S."/>
            <person name="Nori F."/>
            <person name="Ohara O."/>
            <person name="Okazaki Y."/>
            <person name="Orlando V."/>
            <person name="Pang K.C."/>
            <person name="Pavan W.J."/>
            <person name="Pavesi G."/>
            <person name="Pesole G."/>
            <person name="Petrovsky N."/>
            <person name="Piazza S."/>
            <person name="Reed J."/>
            <person name="Reid J.F."/>
            <person name="Ring B.Z."/>
            <person name="Ringwald M."/>
            <person name="Rost B."/>
            <person name="Ruan Y."/>
            <person name="Salzberg S.L."/>
            <person name="Sandelin A."/>
            <person name="Schneider C."/>
            <person name="Schoenbach C."/>
            <person name="Sekiguchi K."/>
            <person name="Semple C.A."/>
            <person name="Seno S."/>
            <person name="Sessa L."/>
            <person name="Sheng Y."/>
            <person name="Shibata Y."/>
            <person name="Shimada H."/>
            <person name="Shimada K."/>
            <person name="Silva D."/>
            <person name="Sinclair B."/>
            <person name="Sperling S."/>
            <person name="Stupka E."/>
            <person name="Sugiura K."/>
            <person name="Sultana R."/>
            <person name="Takenaka Y."/>
            <person name="Taki K."/>
            <person name="Tammoja K."/>
            <person name="Tan S.L."/>
            <person name="Tang S."/>
            <person name="Taylor M.S."/>
            <person name="Tegner J."/>
            <person name="Teichmann S.A."/>
            <person name="Ueda H.R."/>
            <person name="van Nimwegen E."/>
            <person name="Verardo R."/>
            <person name="Wei C.L."/>
            <person name="Yagi K."/>
            <person name="Yamanishi H."/>
            <person name="Zabarovsky E."/>
            <person name="Zhu S."/>
            <person name="Zimmer A."/>
            <person name="Hide W."/>
            <person name="Bult C."/>
            <person name="Grimmond S.M."/>
            <person name="Teasdale R.D."/>
            <person name="Liu E.T."/>
            <person name="Brusic V."/>
            <person name="Quackenbush J."/>
            <person name="Wahlestedt C."/>
            <person name="Mattick J.S."/>
            <person name="Hume D.A."/>
            <person name="Kai C."/>
            <person name="Sasaki D."/>
            <person name="Tomaru Y."/>
            <person name="Fukuda S."/>
            <person name="Kanamori-Katayama M."/>
            <person name="Suzuki M."/>
            <person name="Aoki J."/>
            <person name="Arakawa T."/>
            <person name="Iida J."/>
            <person name="Imamura K."/>
            <person name="Itoh M."/>
            <person name="Kato T."/>
            <person name="Kawaji H."/>
            <person name="Kawagashira N."/>
            <person name="Kawashima T."/>
            <person name="Kojima M."/>
            <person name="Kondo S."/>
            <person name="Konno H."/>
            <person name="Nakano K."/>
            <person name="Ninomiya N."/>
            <person name="Nishio T."/>
            <person name="Okada M."/>
            <person name="Plessy C."/>
            <person name="Shibata K."/>
            <person name="Shiraki T."/>
            <person name="Suzuki S."/>
            <person name="Tagami M."/>
            <person name="Waki K."/>
            <person name="Watahiki A."/>
            <person name="Okamura-Oho Y."/>
            <person name="Suzuki H."/>
            <person name="Kawai J."/>
            <person name="Hayashizaki Y."/>
        </authorList>
    </citation>
    <scope>NUCLEOTIDE SEQUENCE [LARGE SCALE MRNA]</scope>
    <source>
        <strain>C57BL/6J</strain>
        <tissue>Bone marrow</tissue>
        <tissue>Embryo</tissue>
        <tissue>Kidney</tissue>
    </source>
</reference>
<reference key="2">
    <citation type="journal article" date="2009" name="PLoS Biol.">
        <title>Lineage-specific biology revealed by a finished genome assembly of the mouse.</title>
        <authorList>
            <person name="Church D.M."/>
            <person name="Goodstadt L."/>
            <person name="Hillier L.W."/>
            <person name="Zody M.C."/>
            <person name="Goldstein S."/>
            <person name="She X."/>
            <person name="Bult C.J."/>
            <person name="Agarwala R."/>
            <person name="Cherry J.L."/>
            <person name="DiCuccio M."/>
            <person name="Hlavina W."/>
            <person name="Kapustin Y."/>
            <person name="Meric P."/>
            <person name="Maglott D."/>
            <person name="Birtle Z."/>
            <person name="Marques A.C."/>
            <person name="Graves T."/>
            <person name="Zhou S."/>
            <person name="Teague B."/>
            <person name="Potamousis K."/>
            <person name="Churas C."/>
            <person name="Place M."/>
            <person name="Herschleb J."/>
            <person name="Runnheim R."/>
            <person name="Forrest D."/>
            <person name="Amos-Landgraf J."/>
            <person name="Schwartz D.C."/>
            <person name="Cheng Z."/>
            <person name="Lindblad-Toh K."/>
            <person name="Eichler E.E."/>
            <person name="Ponting C.P."/>
        </authorList>
    </citation>
    <scope>NUCLEOTIDE SEQUENCE [LARGE SCALE GENOMIC DNA]</scope>
    <source>
        <strain>C57BL/6J</strain>
    </source>
</reference>
<reference key="3">
    <citation type="journal article" date="2004" name="Genome Res.">
        <title>The status, quality, and expansion of the NIH full-length cDNA project: the Mammalian Gene Collection (MGC).</title>
        <authorList>
            <consortium name="The MGC Project Team"/>
        </authorList>
    </citation>
    <scope>NUCLEOTIDE SEQUENCE [LARGE SCALE MRNA]</scope>
    <source>
        <tissue>Testis</tissue>
    </source>
</reference>
<reference key="4">
    <citation type="journal article" date="2005" name="Eur. J. Neurosci.">
        <title>The novel cytosolic RING finger protein dactylidin is up-regulated in brains of patients with Alzheimer's disease.</title>
        <authorList>
            <person name="von Rotz R.C."/>
            <person name="Kins S."/>
            <person name="Hipfel R."/>
            <person name="von der Kammer H."/>
            <person name="Nitsch R.M."/>
        </authorList>
    </citation>
    <scope>TISSUE SPECIFICITY</scope>
</reference>
<reference key="5">
    <citation type="journal article" date="2011" name="Nat. Med.">
        <title>Iduna protects the brain from glutamate excitotoxicity and stroke by interfering with poly(ADP-ribose) polymer-induced cell death.</title>
        <authorList>
            <person name="Andrabi S.A."/>
            <person name="Kang H.C."/>
            <person name="Haince J.F."/>
            <person name="Lee Y.I."/>
            <person name="Zhang J."/>
            <person name="Chi Z."/>
            <person name="West A.B."/>
            <person name="Koehler R.C."/>
            <person name="Poirier G.G."/>
            <person name="Dawson T.M."/>
            <person name="Dawson V.L."/>
        </authorList>
    </citation>
    <scope>FUNCTION IN NEUROPROTECTION</scope>
    <scope>POLY(ADP-RIBOSE)-BINDING</scope>
    <scope>SUBCELLULAR LOCATION</scope>
    <scope>TISSUE SPECIFICITY</scope>
    <scope>INDUCTION</scope>
    <scope>MUTAGENESIS OF TYR-156 AND ARG-157</scope>
</reference>
<reference key="6">
    <citation type="journal article" date="2011" name="Proc. Natl. Acad. Sci. U.S.A.">
        <title>Iduna is a poly(ADP-ribose) (PAR)-dependent E3 ubiquitin ligase that regulates DNA damage.</title>
        <authorList>
            <person name="Kang H.C."/>
            <person name="Lee Y.I."/>
            <person name="Shin J.H."/>
            <person name="Andrabi S.A."/>
            <person name="Chi Z."/>
            <person name="Gagne J.P."/>
            <person name="Lee Y."/>
            <person name="Ko H.S."/>
            <person name="Lee B.D."/>
            <person name="Poirier G.G."/>
            <person name="Dawson V.L."/>
            <person name="Dawson T.M."/>
        </authorList>
    </citation>
    <scope>FUNCTION</scope>
    <scope>MUTAGENESIS OF HIS-55; CYS-61; TYR-156 AND ARG-157</scope>
</reference>
<reference key="7">
    <citation type="submission" date="2004-10" db="PDB data bank">
        <title>Solution structure of WWE domain in BAB28015.</title>
        <authorList>
            <consortium name="RIKEN structural genomics initiative (RSGI)"/>
        </authorList>
    </citation>
    <scope>STRUCTURE BY NMR OF 83-179</scope>
</reference>